<organism>
    <name type="scientific">Homo sapiens</name>
    <name type="common">Human</name>
    <dbReference type="NCBI Taxonomy" id="9606"/>
    <lineage>
        <taxon>Eukaryota</taxon>
        <taxon>Metazoa</taxon>
        <taxon>Chordata</taxon>
        <taxon>Craniata</taxon>
        <taxon>Vertebrata</taxon>
        <taxon>Euteleostomi</taxon>
        <taxon>Mammalia</taxon>
        <taxon>Eutheria</taxon>
        <taxon>Euarchontoglires</taxon>
        <taxon>Primates</taxon>
        <taxon>Haplorrhini</taxon>
        <taxon>Catarrhini</taxon>
        <taxon>Hominidae</taxon>
        <taxon>Homo</taxon>
    </lineage>
</organism>
<comment type="function">
    <text evidence="5 8">Dual specificity kinase acting on both serine/threonine and tyrosine-containing substrates. Phosphorylates serine- and arginine-rich (SR) proteins of the spliceosomal complex and may be a constituent of a network of regulatory mechanisms that enable SR proteins to control RNA splicing. Phosphorylates: SRSF1, SRSF3 and PTPN1 (PubMed:10480872, PubMed:19168442). Regulates the alternative splicing of tissue factor (F3) pre-mRNA in endothelial cells (PubMed:19168442).</text>
</comment>
<comment type="catalytic activity">
    <reaction evidence="5">
        <text>L-seryl-[protein] + ATP = O-phospho-L-seryl-[protein] + ADP + H(+)</text>
        <dbReference type="Rhea" id="RHEA:17989"/>
        <dbReference type="Rhea" id="RHEA-COMP:9863"/>
        <dbReference type="Rhea" id="RHEA-COMP:11604"/>
        <dbReference type="ChEBI" id="CHEBI:15378"/>
        <dbReference type="ChEBI" id="CHEBI:29999"/>
        <dbReference type="ChEBI" id="CHEBI:30616"/>
        <dbReference type="ChEBI" id="CHEBI:83421"/>
        <dbReference type="ChEBI" id="CHEBI:456216"/>
        <dbReference type="EC" id="2.7.12.1"/>
    </reaction>
    <physiologicalReaction direction="left-to-right" evidence="5">
        <dbReference type="Rhea" id="RHEA:17990"/>
    </physiologicalReaction>
</comment>
<comment type="catalytic activity">
    <reaction evidence="1">
        <text>L-threonyl-[protein] + ATP = O-phospho-L-threonyl-[protein] + ADP + H(+)</text>
        <dbReference type="Rhea" id="RHEA:46608"/>
        <dbReference type="Rhea" id="RHEA-COMP:11060"/>
        <dbReference type="Rhea" id="RHEA-COMP:11605"/>
        <dbReference type="ChEBI" id="CHEBI:15378"/>
        <dbReference type="ChEBI" id="CHEBI:30013"/>
        <dbReference type="ChEBI" id="CHEBI:30616"/>
        <dbReference type="ChEBI" id="CHEBI:61977"/>
        <dbReference type="ChEBI" id="CHEBI:456216"/>
        <dbReference type="EC" id="2.7.12.1"/>
    </reaction>
    <physiologicalReaction direction="left-to-right" evidence="1">
        <dbReference type="Rhea" id="RHEA:46609"/>
    </physiologicalReaction>
</comment>
<comment type="catalytic activity">
    <reaction evidence="1">
        <text>L-tyrosyl-[protein] + ATP = O-phospho-L-tyrosyl-[protein] + ADP + H(+)</text>
        <dbReference type="Rhea" id="RHEA:10596"/>
        <dbReference type="Rhea" id="RHEA-COMP:10136"/>
        <dbReference type="Rhea" id="RHEA-COMP:20101"/>
        <dbReference type="ChEBI" id="CHEBI:15378"/>
        <dbReference type="ChEBI" id="CHEBI:30616"/>
        <dbReference type="ChEBI" id="CHEBI:46858"/>
        <dbReference type="ChEBI" id="CHEBI:61978"/>
        <dbReference type="ChEBI" id="CHEBI:456216"/>
        <dbReference type="EC" id="2.7.12.1"/>
    </reaction>
    <physiologicalReaction direction="left-to-right" evidence="1">
        <dbReference type="Rhea" id="RHEA:10597"/>
    </physiologicalReaction>
</comment>
<comment type="activity regulation">
    <text evidence="1">Regulates splicing of its own pre-mRNA according to its kinase activity; increased expression of the catalytically active form influences splicing to generate the catalytically inactive splicing variant lacking the kinase domain. Leucettine L41 inhibits its kinase activity and affects the regulation of alternative splicing mediated by phosphorylation of SR proteins.</text>
</comment>
<comment type="subunit">
    <text evidence="6">Interacts with PPIG and UBL5.</text>
</comment>
<comment type="interaction">
    <interactant intactId="EBI-473775">
        <id>P49759</id>
    </interactant>
    <interactant intactId="EBI-10172290">
        <id>P60409</id>
        <label>KRTAP10-7</label>
    </interactant>
    <organismsDiffer>false</organismsDiffer>
    <experiments>3</experiments>
</comment>
<comment type="interaction">
    <interactant intactId="EBI-473775">
        <id>P49759</id>
    </interactant>
    <interactant intactId="EBI-742764">
        <id>O76083</id>
        <label>PDE9A</label>
    </interactant>
    <organismsDiffer>false</organismsDiffer>
    <experiments>3</experiments>
</comment>
<comment type="interaction">
    <interactant intactId="EBI-11981867">
        <id>P49759-3</id>
    </interactant>
    <interactant intactId="EBI-751069">
        <id>Q8N2M8</id>
        <label>CLASRP</label>
    </interactant>
    <organismsDiffer>false</organismsDiffer>
    <experiments>3</experiments>
</comment>
<comment type="interaction">
    <interactant intactId="EBI-11981867">
        <id>P49759-3</id>
    </interactant>
    <interactant intactId="EBI-750020">
        <id>P49760</id>
        <label>CLK2</label>
    </interactant>
    <organismsDiffer>false</organismsDiffer>
    <experiments>5</experiments>
</comment>
<comment type="interaction">
    <interactant intactId="EBI-11981867">
        <id>P49759-3</id>
    </interactant>
    <interactant intactId="EBI-739789">
        <id>Q92997</id>
        <label>DVL3</label>
    </interactant>
    <organismsDiffer>false</organismsDiffer>
    <experiments>3</experiments>
</comment>
<comment type="interaction">
    <interactant intactId="EBI-11981867">
        <id>P49759-3</id>
    </interactant>
    <interactant intactId="EBI-12012928">
        <id>P60371</id>
        <label>KRTAP10-6</label>
    </interactant>
    <organismsDiffer>false</organismsDiffer>
    <experiments>3</experiments>
</comment>
<comment type="interaction">
    <interactant intactId="EBI-11981867">
        <id>P49759-3</id>
    </interactant>
    <interactant intactId="EBI-10172290">
        <id>P60409</id>
        <label>KRTAP10-7</label>
    </interactant>
    <organismsDiffer>false</organismsDiffer>
    <experiments>3</experiments>
</comment>
<comment type="interaction">
    <interactant intactId="EBI-11981867">
        <id>P49759-3</id>
    </interactant>
    <interactant intactId="EBI-739832">
        <id>Q8TBB1</id>
        <label>LNX1</label>
    </interactant>
    <organismsDiffer>false</organismsDiffer>
    <experiments>3</experiments>
</comment>
<comment type="interaction">
    <interactant intactId="EBI-11981867">
        <id>P49759-3</id>
    </interactant>
    <interactant intactId="EBI-11524542">
        <id>O76083-2</id>
        <label>PDE9A</label>
    </interactant>
    <organismsDiffer>false</organismsDiffer>
    <experiments>3</experiments>
</comment>
<comment type="interaction">
    <interactant intactId="EBI-11981867">
        <id>P49759-3</id>
    </interactant>
    <interactant intactId="EBI-19952306">
        <id>O14492-2</id>
        <label>SH2B2</label>
    </interactant>
    <organismsDiffer>false</organismsDiffer>
    <experiments>3</experiments>
</comment>
<comment type="interaction">
    <interactant intactId="EBI-11981867">
        <id>P49759-3</id>
    </interactant>
    <interactant intactId="EBI-3867173">
        <id>A7MD48</id>
        <label>SRRM4</label>
    </interactant>
    <organismsDiffer>false</organismsDiffer>
    <experiments>3</experiments>
</comment>
<comment type="interaction">
    <interactant intactId="EBI-11981867">
        <id>P49759-3</id>
    </interactant>
    <interactant intactId="EBI-398920">
        <id>Q07955</id>
        <label>SRSF1</label>
    </interactant>
    <organismsDiffer>false</organismsDiffer>
    <experiments>3</experiments>
</comment>
<comment type="interaction">
    <interactant intactId="EBI-11981867">
        <id>P49759-3</id>
    </interactant>
    <interactant intactId="EBI-353655">
        <id>O75494</id>
        <label>SRSF10</label>
    </interactant>
    <organismsDiffer>false</organismsDiffer>
    <experiments>3</experiments>
</comment>
<comment type="interaction">
    <interactant intactId="EBI-11981867">
        <id>P49759-3</id>
    </interactant>
    <interactant intactId="EBI-372557">
        <id>P84103</id>
        <label>SRSF3</label>
    </interactant>
    <organismsDiffer>false</organismsDiffer>
    <experiments>3</experiments>
</comment>
<comment type="interaction">
    <interactant intactId="EBI-11981867">
        <id>P49759-3</id>
    </interactant>
    <interactant intactId="EBI-398885">
        <id>Q16629</id>
        <label>SRSF7</label>
    </interactant>
    <organismsDiffer>false</organismsDiffer>
    <experiments>3</experiments>
</comment>
<comment type="interaction">
    <interactant intactId="EBI-11981867">
        <id>P49759-3</id>
    </interactant>
    <interactant intactId="EBI-725485">
        <id>P62995</id>
        <label>TRA2B</label>
    </interactant>
    <organismsDiffer>false</organismsDiffer>
    <experiments>5</experiments>
</comment>
<comment type="subcellular location">
    <subcellularLocation>
        <location evidence="1">Nucleus</location>
    </subcellularLocation>
</comment>
<comment type="alternative products">
    <event type="alternative splicing"/>
    <isoform>
        <id>P49759-1</id>
        <name>1</name>
        <name>Long</name>
        <sequence type="displayed"/>
    </isoform>
    <isoform>
        <id>P49759-2</id>
        <name>2</name>
        <name>Short</name>
        <sequence type="described" ref="VSP_004852 VSP_004853"/>
    </isoform>
    <isoform>
        <id>P49759-3</id>
        <name>3</name>
        <sequence type="described" ref="VSP_043578"/>
    </isoform>
</comment>
<comment type="tissue specificity">
    <text evidence="8">Endothelial cells.</text>
</comment>
<comment type="PTM">
    <text evidence="1">Autophosphorylates on all three types of residues.</text>
</comment>
<comment type="miscellaneous">
    <molecule>Isoform 2</molecule>
    <text evidence="12">Lacks the kinase domain. May be produced at very low levels due to a premature stop codon in the mRNA, leading to nonsense-mediated mRNA decay.</text>
</comment>
<comment type="similarity">
    <text evidence="12">Belongs to the protein kinase superfamily. CMGC Ser/Thr protein kinase family. Lammer subfamily.</text>
</comment>
<evidence type="ECO:0000250" key="1">
    <source>
        <dbReference type="UniProtKB" id="P22518"/>
    </source>
</evidence>
<evidence type="ECO:0000255" key="2">
    <source>
        <dbReference type="PROSITE-ProRule" id="PRU00159"/>
    </source>
</evidence>
<evidence type="ECO:0000255" key="3">
    <source>
        <dbReference type="PROSITE-ProRule" id="PRU10027"/>
    </source>
</evidence>
<evidence type="ECO:0000256" key="4">
    <source>
        <dbReference type="SAM" id="MobiDB-lite"/>
    </source>
</evidence>
<evidence type="ECO:0000269" key="5">
    <source>
    </source>
</evidence>
<evidence type="ECO:0000269" key="6">
    <source>
    </source>
</evidence>
<evidence type="ECO:0000269" key="7">
    <source>
    </source>
</evidence>
<evidence type="ECO:0000269" key="8">
    <source>
    </source>
</evidence>
<evidence type="ECO:0000303" key="9">
    <source>
    </source>
</evidence>
<evidence type="ECO:0000303" key="10">
    <source>
    </source>
</evidence>
<evidence type="ECO:0000303" key="11">
    <source>
    </source>
</evidence>
<evidence type="ECO:0000305" key="12"/>
<evidence type="ECO:0000305" key="13">
    <source>
    </source>
</evidence>
<evidence type="ECO:0000312" key="14">
    <source>
        <dbReference type="HGNC" id="HGNC:2068"/>
    </source>
</evidence>
<evidence type="ECO:0007744" key="15">
    <source>
    </source>
</evidence>
<evidence type="ECO:0007744" key="16">
    <source>
    </source>
</evidence>
<evidence type="ECO:0007744" key="17">
    <source>
    </source>
</evidence>
<evidence type="ECO:0007744" key="18">
    <source>
    </source>
</evidence>
<evidence type="ECO:0007744" key="19">
    <source>
    </source>
</evidence>
<evidence type="ECO:0007829" key="20">
    <source>
        <dbReference type="PDB" id="6FT8"/>
    </source>
</evidence>
<evidence type="ECO:0007829" key="21">
    <source>
        <dbReference type="PDB" id="6YTE"/>
    </source>
</evidence>
<evidence type="ECO:0007829" key="22">
    <source>
        <dbReference type="PDB" id="6YTI"/>
    </source>
</evidence>
<evidence type="ECO:0007829" key="23">
    <source>
        <dbReference type="PDB" id="6Z50"/>
    </source>
</evidence>
<proteinExistence type="evidence at protein level"/>
<gene>
    <name evidence="14" type="primary">CLK1</name>
    <name type="synonym">CLK</name>
</gene>
<sequence length="484" mass="57291">MRHSKRTYCPDWDDKDWDYGKWRSSSSHKRRKRSHSSAQENKRCKYNHSKMCDSHYLESRSINEKDYHSRRYIDEYRNDYTQGCEPGHRQRDHESRYQNHSSKSSGRSGRSSYKSKHRIHHSTSHRRSHGKSHRRKRTRSVEDDEEGHLICQSGDVLSARYEIVDTLGEGAFGKVVECIDHKAGGRHVAVKIVKNVDRYCEAARSEIQVLEHLNTTDPNSTFRCVQMLEWFEHHGHICIVFELLGLSTYDFIKENGFLPFRLDHIRKMAYQICKSVNFLHSNKLTHTDLKPENILFVQSDYTEAYNPKIKRDERTLINPDIKVVDFGSATYDDEHHSTLVSTRHYRAPEVILALGWSQPCDVWSIGCILIEYYLGFTVFPTHDSKEHLAMMERILGPLPKHMIQKTRKRKYFHHDRLDWDEHSSAGRYVSRRCKPLKEFMLSQDVEHERLFDLIQKMLEYDPAKRITLREALKHPFFDLLKKSI</sequence>
<feature type="chain" id="PRO_0000085866" description="Dual specificity protein kinase CLK1">
    <location>
        <begin position="1"/>
        <end position="484"/>
    </location>
</feature>
<feature type="domain" description="Protein kinase" evidence="2">
    <location>
        <begin position="161"/>
        <end position="477"/>
    </location>
</feature>
<feature type="region of interest" description="Disordered" evidence="4">
    <location>
        <begin position="1"/>
        <end position="42"/>
    </location>
</feature>
<feature type="region of interest" description="Disordered" evidence="4">
    <location>
        <begin position="79"/>
        <end position="146"/>
    </location>
</feature>
<feature type="compositionally biased region" description="Basic residues" evidence="4">
    <location>
        <begin position="26"/>
        <end position="35"/>
    </location>
</feature>
<feature type="compositionally biased region" description="Basic and acidic residues" evidence="4">
    <location>
        <begin position="86"/>
        <end position="97"/>
    </location>
</feature>
<feature type="compositionally biased region" description="Low complexity" evidence="4">
    <location>
        <begin position="100"/>
        <end position="112"/>
    </location>
</feature>
<feature type="compositionally biased region" description="Basic residues" evidence="4">
    <location>
        <begin position="113"/>
        <end position="138"/>
    </location>
</feature>
<feature type="active site" description="Proton acceptor" evidence="2 3">
    <location>
        <position position="288"/>
    </location>
</feature>
<feature type="binding site" evidence="2">
    <location>
        <begin position="167"/>
        <end position="175"/>
    </location>
    <ligand>
        <name>ATP</name>
        <dbReference type="ChEBI" id="CHEBI:30616"/>
    </ligand>
</feature>
<feature type="binding site" evidence="2">
    <location>
        <position position="191"/>
    </location>
    <ligand>
        <name>ATP</name>
        <dbReference type="ChEBI" id="CHEBI:30616"/>
    </ligand>
</feature>
<feature type="modified residue" description="Phosphoserine" evidence="17">
    <location>
        <position position="61"/>
    </location>
</feature>
<feature type="modified residue" description="Phosphothreonine" evidence="16">
    <location>
        <position position="138"/>
    </location>
</feature>
<feature type="modified residue" description="Phosphoserine" evidence="15 16 17 18 19">
    <location>
        <position position="140"/>
    </location>
</feature>
<feature type="splice variant" id="VSP_043578" description="In isoform 3." evidence="9">
    <original>M</original>
    <variation>MAAGRRPASALWPERRGSPLRGDLLGFQNVREPSSCGETLSGM</variation>
    <location>
        <position position="1"/>
    </location>
</feature>
<feature type="splice variant" id="VSP_004852" description="In isoform 2." evidence="9 10 11">
    <original>KSHRRK</original>
    <variation>MKLLIL</variation>
    <location>
        <begin position="131"/>
        <end position="136"/>
    </location>
</feature>
<feature type="splice variant" id="VSP_004853" description="In isoform 2." evidence="9 10 11">
    <location>
        <begin position="137"/>
        <end position="484"/>
    </location>
</feature>
<feature type="sequence variant" id="VAR_040409" description="In dbSNP:rs55989135." evidence="7">
    <original>S</original>
    <variation>F</variation>
    <location>
        <position position="61"/>
    </location>
</feature>
<feature type="sequence variant" id="VAR_046551" description="In dbSNP:rs6735666.">
    <original>N</original>
    <variation>D</variation>
    <location>
        <position position="99"/>
    </location>
</feature>
<feature type="sequence variant" id="VAR_040410" description="In dbSNP:rs56135616." evidence="7">
    <original>R</original>
    <variation>G</variation>
    <location>
        <position position="118"/>
    </location>
</feature>
<feature type="sequence variant" id="VAR_040411" description="In dbSNP:rs35412475." evidence="7">
    <original>P</original>
    <variation>S</variation>
    <location>
        <position position="307"/>
    </location>
</feature>
<feature type="sequence variant" id="VAR_040412" description="In dbSNP:rs35393352." evidence="7">
    <original>M</original>
    <variation>T</variation>
    <location>
        <position position="440"/>
    </location>
</feature>
<feature type="sequence variant" id="VAR_051620" description="In dbSNP:rs12709.">
    <original>E</original>
    <variation>G</variation>
    <location>
        <position position="459"/>
    </location>
</feature>
<feature type="sequence conflict" description="In Ref. 1; AAA61480." evidence="12" ref="1">
    <original>R</original>
    <variation>A</variation>
    <location>
        <position position="432"/>
    </location>
</feature>
<feature type="helix" evidence="20">
    <location>
        <begin position="148"/>
        <end position="150"/>
    </location>
</feature>
<feature type="turn" evidence="20">
    <location>
        <begin position="158"/>
        <end position="160"/>
    </location>
</feature>
<feature type="strand" evidence="20">
    <location>
        <begin position="161"/>
        <end position="170"/>
    </location>
</feature>
<feature type="strand" evidence="20">
    <location>
        <begin position="173"/>
        <end position="180"/>
    </location>
</feature>
<feature type="turn" evidence="20">
    <location>
        <begin position="181"/>
        <end position="185"/>
    </location>
</feature>
<feature type="strand" evidence="20">
    <location>
        <begin position="187"/>
        <end position="193"/>
    </location>
</feature>
<feature type="helix" evidence="20">
    <location>
        <begin position="197"/>
        <end position="216"/>
    </location>
</feature>
<feature type="strand" evidence="23">
    <location>
        <begin position="222"/>
        <end position="224"/>
    </location>
</feature>
<feature type="strand" evidence="20">
    <location>
        <begin position="227"/>
        <end position="233"/>
    </location>
</feature>
<feature type="strand" evidence="20">
    <location>
        <begin position="236"/>
        <end position="242"/>
    </location>
</feature>
<feature type="helix" evidence="20">
    <location>
        <begin position="248"/>
        <end position="254"/>
    </location>
</feature>
<feature type="turn" evidence="20">
    <location>
        <begin position="255"/>
        <end position="257"/>
    </location>
</feature>
<feature type="helix" evidence="20">
    <location>
        <begin position="262"/>
        <end position="281"/>
    </location>
</feature>
<feature type="helix" evidence="20">
    <location>
        <begin position="291"/>
        <end position="293"/>
    </location>
</feature>
<feature type="strand" evidence="20">
    <location>
        <begin position="294"/>
        <end position="297"/>
    </location>
</feature>
<feature type="strand" evidence="20">
    <location>
        <begin position="301"/>
        <end position="306"/>
    </location>
</feature>
<feature type="turn" evidence="20">
    <location>
        <begin position="307"/>
        <end position="310"/>
    </location>
</feature>
<feature type="strand" evidence="20">
    <location>
        <begin position="311"/>
        <end position="317"/>
    </location>
</feature>
<feature type="strand" evidence="20">
    <location>
        <begin position="321"/>
        <end position="323"/>
    </location>
</feature>
<feature type="strand" evidence="21">
    <location>
        <begin position="330"/>
        <end position="334"/>
    </location>
</feature>
<feature type="helix" evidence="20">
    <location>
        <begin position="343"/>
        <end position="345"/>
    </location>
</feature>
<feature type="helix" evidence="20">
    <location>
        <begin position="348"/>
        <end position="351"/>
    </location>
</feature>
<feature type="helix" evidence="20">
    <location>
        <begin position="359"/>
        <end position="374"/>
    </location>
</feature>
<feature type="helix" evidence="20">
    <location>
        <begin position="384"/>
        <end position="395"/>
    </location>
</feature>
<feature type="helix" evidence="20">
    <location>
        <begin position="400"/>
        <end position="405"/>
    </location>
</feature>
<feature type="helix" evidence="20">
    <location>
        <begin position="409"/>
        <end position="411"/>
    </location>
</feature>
<feature type="strand" evidence="22">
    <location>
        <begin position="421"/>
        <end position="423"/>
    </location>
</feature>
<feature type="helix" evidence="20">
    <location>
        <begin position="424"/>
        <end position="432"/>
    </location>
</feature>
<feature type="helix" evidence="20">
    <location>
        <begin position="436"/>
        <end position="439"/>
    </location>
</feature>
<feature type="helix" evidence="20">
    <location>
        <begin position="445"/>
        <end position="457"/>
    </location>
</feature>
<feature type="turn" evidence="20">
    <location>
        <begin position="462"/>
        <end position="464"/>
    </location>
</feature>
<feature type="helix" evidence="20">
    <location>
        <begin position="468"/>
        <end position="471"/>
    </location>
</feature>
<feature type="helix" evidence="20">
    <location>
        <begin position="475"/>
        <end position="481"/>
    </location>
</feature>
<accession>P49759</accession>
<accession>B4DFW7</accession>
<accession>Q0P694</accession>
<accession>Q8N5V8</accession>
<keyword id="KW-0002">3D-structure</keyword>
<keyword id="KW-0025">Alternative splicing</keyword>
<keyword id="KW-0067">ATP-binding</keyword>
<keyword id="KW-0418">Kinase</keyword>
<keyword id="KW-0547">Nucleotide-binding</keyword>
<keyword id="KW-0539">Nucleus</keyword>
<keyword id="KW-0597">Phosphoprotein</keyword>
<keyword id="KW-1267">Proteomics identification</keyword>
<keyword id="KW-1185">Reference proteome</keyword>
<keyword id="KW-0723">Serine/threonine-protein kinase</keyword>
<keyword id="KW-0808">Transferase</keyword>
<keyword id="KW-0829">Tyrosine-protein kinase</keyword>
<name>CLK1_HUMAN</name>
<protein>
    <recommendedName>
        <fullName evidence="13">Dual specificity protein kinase CLK1</fullName>
        <ecNumber evidence="5">2.7.12.1</ecNumber>
    </recommendedName>
    <alternativeName>
        <fullName evidence="14">CDC-like kinase 1</fullName>
    </alternativeName>
</protein>
<reference key="1">
    <citation type="journal article" date="1991" name="J. Biol. Chem.">
        <title>Molecular cloning of a novel human cdc2/CDC28-like protein kinase.</title>
        <authorList>
            <person name="Johnson K.W."/>
            <person name="Smith K.A."/>
        </authorList>
    </citation>
    <scope>NUCLEOTIDE SEQUENCE [MRNA] (ISOFORM 1)</scope>
</reference>
<reference key="2">
    <citation type="journal article" date="1994" name="J. Mol. Biol.">
        <title>Characterization by cDNA cloning of two new human protein kinases. Evidence by sequence comparison of a new family of mammalian protein kinases.</title>
        <authorList>
            <person name="Hanes J.J."/>
            <person name="der Kammer H."/>
            <person name="Klaudiny J.J."/>
            <person name="Scheit K.H."/>
        </authorList>
    </citation>
    <scope>NUCLEOTIDE SEQUENCE [MRNA] (ISOFORM 2)</scope>
</reference>
<reference key="3">
    <citation type="journal article" date="2004" name="Nat. Genet.">
        <title>Complete sequencing and characterization of 21,243 full-length human cDNAs.</title>
        <authorList>
            <person name="Ota T."/>
            <person name="Suzuki Y."/>
            <person name="Nishikawa T."/>
            <person name="Otsuki T."/>
            <person name="Sugiyama T."/>
            <person name="Irie R."/>
            <person name="Wakamatsu A."/>
            <person name="Hayashi K."/>
            <person name="Sato H."/>
            <person name="Nagai K."/>
            <person name="Kimura K."/>
            <person name="Makita H."/>
            <person name="Sekine M."/>
            <person name="Obayashi M."/>
            <person name="Nishi T."/>
            <person name="Shibahara T."/>
            <person name="Tanaka T."/>
            <person name="Ishii S."/>
            <person name="Yamamoto J."/>
            <person name="Saito K."/>
            <person name="Kawai Y."/>
            <person name="Isono Y."/>
            <person name="Nakamura Y."/>
            <person name="Nagahari K."/>
            <person name="Murakami K."/>
            <person name="Yasuda T."/>
            <person name="Iwayanagi T."/>
            <person name="Wagatsuma M."/>
            <person name="Shiratori A."/>
            <person name="Sudo H."/>
            <person name="Hosoiri T."/>
            <person name="Kaku Y."/>
            <person name="Kodaira H."/>
            <person name="Kondo H."/>
            <person name="Sugawara M."/>
            <person name="Takahashi M."/>
            <person name="Kanda K."/>
            <person name="Yokoi T."/>
            <person name="Furuya T."/>
            <person name="Kikkawa E."/>
            <person name="Omura Y."/>
            <person name="Abe K."/>
            <person name="Kamihara K."/>
            <person name="Katsuta N."/>
            <person name="Sato K."/>
            <person name="Tanikawa M."/>
            <person name="Yamazaki M."/>
            <person name="Ninomiya K."/>
            <person name="Ishibashi T."/>
            <person name="Yamashita H."/>
            <person name="Murakawa K."/>
            <person name="Fujimori K."/>
            <person name="Tanai H."/>
            <person name="Kimata M."/>
            <person name="Watanabe M."/>
            <person name="Hiraoka S."/>
            <person name="Chiba Y."/>
            <person name="Ishida S."/>
            <person name="Ono Y."/>
            <person name="Takiguchi S."/>
            <person name="Watanabe S."/>
            <person name="Yosida M."/>
            <person name="Hotuta T."/>
            <person name="Kusano J."/>
            <person name="Kanehori K."/>
            <person name="Takahashi-Fujii A."/>
            <person name="Hara H."/>
            <person name="Tanase T.-O."/>
            <person name="Nomura Y."/>
            <person name="Togiya S."/>
            <person name="Komai F."/>
            <person name="Hara R."/>
            <person name="Takeuchi K."/>
            <person name="Arita M."/>
            <person name="Imose N."/>
            <person name="Musashino K."/>
            <person name="Yuuki H."/>
            <person name="Oshima A."/>
            <person name="Sasaki N."/>
            <person name="Aotsuka S."/>
            <person name="Yoshikawa Y."/>
            <person name="Matsunawa H."/>
            <person name="Ichihara T."/>
            <person name="Shiohata N."/>
            <person name="Sano S."/>
            <person name="Moriya S."/>
            <person name="Momiyama H."/>
            <person name="Satoh N."/>
            <person name="Takami S."/>
            <person name="Terashima Y."/>
            <person name="Suzuki O."/>
            <person name="Nakagawa S."/>
            <person name="Senoh A."/>
            <person name="Mizoguchi H."/>
            <person name="Goto Y."/>
            <person name="Shimizu F."/>
            <person name="Wakebe H."/>
            <person name="Hishigaki H."/>
            <person name="Watanabe T."/>
            <person name="Sugiyama A."/>
            <person name="Takemoto M."/>
            <person name="Kawakami B."/>
            <person name="Yamazaki M."/>
            <person name="Watanabe K."/>
            <person name="Kumagai A."/>
            <person name="Itakura S."/>
            <person name="Fukuzumi Y."/>
            <person name="Fujimori Y."/>
            <person name="Komiyama M."/>
            <person name="Tashiro H."/>
            <person name="Tanigami A."/>
            <person name="Fujiwara T."/>
            <person name="Ono T."/>
            <person name="Yamada K."/>
            <person name="Fujii Y."/>
            <person name="Ozaki K."/>
            <person name="Hirao M."/>
            <person name="Ohmori Y."/>
            <person name="Kawabata A."/>
            <person name="Hikiji T."/>
            <person name="Kobatake N."/>
            <person name="Inagaki H."/>
            <person name="Ikema Y."/>
            <person name="Okamoto S."/>
            <person name="Okitani R."/>
            <person name="Kawakami T."/>
            <person name="Noguchi S."/>
            <person name="Itoh T."/>
            <person name="Shigeta K."/>
            <person name="Senba T."/>
            <person name="Matsumura K."/>
            <person name="Nakajima Y."/>
            <person name="Mizuno T."/>
            <person name="Morinaga M."/>
            <person name="Sasaki M."/>
            <person name="Togashi T."/>
            <person name="Oyama M."/>
            <person name="Hata H."/>
            <person name="Watanabe M."/>
            <person name="Komatsu T."/>
            <person name="Mizushima-Sugano J."/>
            <person name="Satoh T."/>
            <person name="Shirai Y."/>
            <person name="Takahashi Y."/>
            <person name="Nakagawa K."/>
            <person name="Okumura K."/>
            <person name="Nagase T."/>
            <person name="Nomura N."/>
            <person name="Kikuchi H."/>
            <person name="Masuho Y."/>
            <person name="Yamashita R."/>
            <person name="Nakai K."/>
            <person name="Yada T."/>
            <person name="Nakamura Y."/>
            <person name="Ohara O."/>
            <person name="Isogai T."/>
            <person name="Sugano S."/>
        </authorList>
    </citation>
    <scope>NUCLEOTIDE SEQUENCE [LARGE SCALE MRNA] (ISOFORMS 2 AND 3)</scope>
    <source>
        <tissue>Amygdala</tissue>
    </source>
</reference>
<reference key="4">
    <citation type="journal article" date="2005" name="Nature">
        <title>Generation and annotation of the DNA sequences of human chromosomes 2 and 4.</title>
        <authorList>
            <person name="Hillier L.W."/>
            <person name="Graves T.A."/>
            <person name="Fulton R.S."/>
            <person name="Fulton L.A."/>
            <person name="Pepin K.H."/>
            <person name="Minx P."/>
            <person name="Wagner-McPherson C."/>
            <person name="Layman D."/>
            <person name="Wylie K."/>
            <person name="Sekhon M."/>
            <person name="Becker M.C."/>
            <person name="Fewell G.A."/>
            <person name="Delehaunty K.D."/>
            <person name="Miner T.L."/>
            <person name="Nash W.E."/>
            <person name="Kremitzki C."/>
            <person name="Oddy L."/>
            <person name="Du H."/>
            <person name="Sun H."/>
            <person name="Bradshaw-Cordum H."/>
            <person name="Ali J."/>
            <person name="Carter J."/>
            <person name="Cordes M."/>
            <person name="Harris A."/>
            <person name="Isak A."/>
            <person name="van Brunt A."/>
            <person name="Nguyen C."/>
            <person name="Du F."/>
            <person name="Courtney L."/>
            <person name="Kalicki J."/>
            <person name="Ozersky P."/>
            <person name="Abbott S."/>
            <person name="Armstrong J."/>
            <person name="Belter E.A."/>
            <person name="Caruso L."/>
            <person name="Cedroni M."/>
            <person name="Cotton M."/>
            <person name="Davidson T."/>
            <person name="Desai A."/>
            <person name="Elliott G."/>
            <person name="Erb T."/>
            <person name="Fronick C."/>
            <person name="Gaige T."/>
            <person name="Haakenson W."/>
            <person name="Haglund K."/>
            <person name="Holmes A."/>
            <person name="Harkins R."/>
            <person name="Kim K."/>
            <person name="Kruchowski S.S."/>
            <person name="Strong C.M."/>
            <person name="Grewal N."/>
            <person name="Goyea E."/>
            <person name="Hou S."/>
            <person name="Levy A."/>
            <person name="Martinka S."/>
            <person name="Mead K."/>
            <person name="McLellan M.D."/>
            <person name="Meyer R."/>
            <person name="Randall-Maher J."/>
            <person name="Tomlinson C."/>
            <person name="Dauphin-Kohlberg S."/>
            <person name="Kozlowicz-Reilly A."/>
            <person name="Shah N."/>
            <person name="Swearengen-Shahid S."/>
            <person name="Snider J."/>
            <person name="Strong J.T."/>
            <person name="Thompson J."/>
            <person name="Yoakum M."/>
            <person name="Leonard S."/>
            <person name="Pearman C."/>
            <person name="Trani L."/>
            <person name="Radionenko M."/>
            <person name="Waligorski J.E."/>
            <person name="Wang C."/>
            <person name="Rock S.M."/>
            <person name="Tin-Wollam A.-M."/>
            <person name="Maupin R."/>
            <person name="Latreille P."/>
            <person name="Wendl M.C."/>
            <person name="Yang S.-P."/>
            <person name="Pohl C."/>
            <person name="Wallis J.W."/>
            <person name="Spieth J."/>
            <person name="Bieri T.A."/>
            <person name="Berkowicz N."/>
            <person name="Nelson J.O."/>
            <person name="Osborne J."/>
            <person name="Ding L."/>
            <person name="Meyer R."/>
            <person name="Sabo A."/>
            <person name="Shotland Y."/>
            <person name="Sinha P."/>
            <person name="Wohldmann P.E."/>
            <person name="Cook L.L."/>
            <person name="Hickenbotham M.T."/>
            <person name="Eldred J."/>
            <person name="Williams D."/>
            <person name="Jones T.A."/>
            <person name="She X."/>
            <person name="Ciccarelli F.D."/>
            <person name="Izaurralde E."/>
            <person name="Taylor J."/>
            <person name="Schmutz J."/>
            <person name="Myers R.M."/>
            <person name="Cox D.R."/>
            <person name="Huang X."/>
            <person name="McPherson J.D."/>
            <person name="Mardis E.R."/>
            <person name="Clifton S.W."/>
            <person name="Warren W.C."/>
            <person name="Chinwalla A.T."/>
            <person name="Eddy S.R."/>
            <person name="Marra M.A."/>
            <person name="Ovcharenko I."/>
            <person name="Furey T.S."/>
            <person name="Miller W."/>
            <person name="Eichler E.E."/>
            <person name="Bork P."/>
            <person name="Suyama M."/>
            <person name="Torrents D."/>
            <person name="Waterston R.H."/>
            <person name="Wilson R.K."/>
        </authorList>
    </citation>
    <scope>NUCLEOTIDE SEQUENCE [LARGE SCALE GENOMIC DNA]</scope>
</reference>
<reference key="5">
    <citation type="submission" date="2005-07" db="EMBL/GenBank/DDBJ databases">
        <authorList>
            <person name="Mural R.J."/>
            <person name="Istrail S."/>
            <person name="Sutton G.G."/>
            <person name="Florea L."/>
            <person name="Halpern A.L."/>
            <person name="Mobarry C.M."/>
            <person name="Lippert R."/>
            <person name="Walenz B."/>
            <person name="Shatkay H."/>
            <person name="Dew I."/>
            <person name="Miller J.R."/>
            <person name="Flanigan M.J."/>
            <person name="Edwards N.J."/>
            <person name="Bolanos R."/>
            <person name="Fasulo D."/>
            <person name="Halldorsson B.V."/>
            <person name="Hannenhalli S."/>
            <person name="Turner R."/>
            <person name="Yooseph S."/>
            <person name="Lu F."/>
            <person name="Nusskern D.R."/>
            <person name="Shue B.C."/>
            <person name="Zheng X.H."/>
            <person name="Zhong F."/>
            <person name="Delcher A.L."/>
            <person name="Huson D.H."/>
            <person name="Kravitz S.A."/>
            <person name="Mouchard L."/>
            <person name="Reinert K."/>
            <person name="Remington K.A."/>
            <person name="Clark A.G."/>
            <person name="Waterman M.S."/>
            <person name="Eichler E.E."/>
            <person name="Adams M.D."/>
            <person name="Hunkapiller M.W."/>
            <person name="Myers E.W."/>
            <person name="Venter J.C."/>
        </authorList>
    </citation>
    <scope>NUCLEOTIDE SEQUENCE [LARGE SCALE GENOMIC DNA]</scope>
</reference>
<reference key="6">
    <citation type="journal article" date="2004" name="Genome Res.">
        <title>The status, quality, and expansion of the NIH full-length cDNA project: the Mammalian Gene Collection (MGC).</title>
        <authorList>
            <consortium name="The MGC Project Team"/>
        </authorList>
    </citation>
    <scope>NUCLEOTIDE SEQUENCE [LARGE SCALE MRNA] (ISOFORMS 1 AND 2)</scope>
    <source>
        <tissue>Blood</tissue>
        <tissue>Bone</tissue>
    </source>
</reference>
<reference key="7">
    <citation type="journal article" date="1999" name="J. Biol. Chem.">
        <title>The CLK family kinases, CLK1 and CLK2, phosphorylate and activate the tyrosine phosphatase, PTP-1B.</title>
        <authorList>
            <person name="Moeslein F.M."/>
            <person name="Myers M.P."/>
            <person name="Landreth G.E."/>
        </authorList>
    </citation>
    <scope>FUNCTION</scope>
    <scope>CATALYTIC ACTIVITY</scope>
</reference>
<reference key="8">
    <citation type="journal article" date="2003" name="Biochem. Biophys. Res. Commun.">
        <title>Beacon interacts with cdc2/cdc28-like kinases.</title>
        <authorList>
            <person name="Kantham L."/>
            <person name="Kerr-Bayles L."/>
            <person name="Godde N."/>
            <person name="Quick M."/>
            <person name="Webb R."/>
            <person name="Sunderland T."/>
            <person name="Bond J."/>
            <person name="Walder K."/>
            <person name="Augert G."/>
            <person name="Collier G."/>
        </authorList>
    </citation>
    <scope>INTERACTION WITH UBL5</scope>
</reference>
<reference key="9">
    <citation type="journal article" date="2004" name="Genome Biol.">
        <title>An unappreciated role for RNA surveillance.</title>
        <authorList>
            <person name="Hillman R.T."/>
            <person name="Green R.E."/>
            <person name="Brenner S.E."/>
        </authorList>
    </citation>
    <scope>SPLICE ISOFORM(S) THAT ARE POTENTIAL NMD TARGET(S)</scope>
</reference>
<reference key="10">
    <citation type="journal article" date="2006" name="Cell">
        <title>Global, in vivo, and site-specific phosphorylation dynamics in signaling networks.</title>
        <authorList>
            <person name="Olsen J.V."/>
            <person name="Blagoev B."/>
            <person name="Gnad F."/>
            <person name="Macek B."/>
            <person name="Kumar C."/>
            <person name="Mortensen P."/>
            <person name="Mann M."/>
        </authorList>
    </citation>
    <scope>PHOSPHORYLATION [LARGE SCALE ANALYSIS] AT SER-140</scope>
    <scope>IDENTIFICATION BY MASS SPECTROMETRY [LARGE SCALE ANALYSIS]</scope>
    <source>
        <tissue>Cervix carcinoma</tissue>
    </source>
</reference>
<reference key="11">
    <citation type="journal article" date="2008" name="Mol. Cell">
        <title>Kinase-selective enrichment enables quantitative phosphoproteomics of the kinome across the cell cycle.</title>
        <authorList>
            <person name="Daub H."/>
            <person name="Olsen J.V."/>
            <person name="Bairlein M."/>
            <person name="Gnad F."/>
            <person name="Oppermann F.S."/>
            <person name="Korner R."/>
            <person name="Greff Z."/>
            <person name="Keri G."/>
            <person name="Stemmann O."/>
            <person name="Mann M."/>
        </authorList>
    </citation>
    <scope>PHOSPHORYLATION [LARGE SCALE ANALYSIS] AT SER-61 AND SER-140</scope>
    <scope>IDENTIFICATION BY MASS SPECTROMETRY [LARGE SCALE ANALYSIS]</scope>
    <source>
        <tissue>Cervix carcinoma</tissue>
    </source>
</reference>
<reference key="12">
    <citation type="journal article" date="2008" name="Proc. Natl. Acad. Sci. U.S.A.">
        <title>A quantitative atlas of mitotic phosphorylation.</title>
        <authorList>
            <person name="Dephoure N."/>
            <person name="Zhou C."/>
            <person name="Villen J."/>
            <person name="Beausoleil S.A."/>
            <person name="Bakalarski C.E."/>
            <person name="Elledge S.J."/>
            <person name="Gygi S.P."/>
        </authorList>
    </citation>
    <scope>PHOSPHORYLATION [LARGE SCALE ANALYSIS] AT THR-138 AND SER-140</scope>
    <scope>IDENTIFICATION BY MASS SPECTROMETRY [LARGE SCALE ANALYSIS]</scope>
    <source>
        <tissue>Cervix carcinoma</tissue>
    </source>
</reference>
<reference key="13">
    <citation type="journal article" date="2009" name="Circ. Res.">
        <title>Cdc2-like kinases and DNA topoisomerase I regulate alternative splicing of tissue factor in human endothelial cells.</title>
        <authorList>
            <person name="Eisenreich A."/>
            <person name="Bogdanov V.Y."/>
            <person name="Zakrzewicz A."/>
            <person name="Pries A."/>
            <person name="Antoniak S."/>
            <person name="Poller W."/>
            <person name="Schultheiss H.P."/>
            <person name="Rauch U."/>
        </authorList>
    </citation>
    <scope>FUNCTION</scope>
    <scope>ALTERNATIVE SPLICING</scope>
    <scope>TISSUE SPECIFICITY</scope>
</reference>
<reference key="14">
    <citation type="journal article" date="2009" name="Mol. Cell. Proteomics">
        <title>Large-scale proteomics analysis of the human kinome.</title>
        <authorList>
            <person name="Oppermann F.S."/>
            <person name="Gnad F."/>
            <person name="Olsen J.V."/>
            <person name="Hornberger R."/>
            <person name="Greff Z."/>
            <person name="Keri G."/>
            <person name="Mann M."/>
            <person name="Daub H."/>
        </authorList>
    </citation>
    <scope>PHOSPHORYLATION [LARGE SCALE ANALYSIS] AT SER-140</scope>
    <scope>IDENTIFICATION BY MASS SPECTROMETRY [LARGE SCALE ANALYSIS]</scope>
</reference>
<reference key="15">
    <citation type="journal article" date="2013" name="J. Proteome Res.">
        <title>Toward a comprehensive characterization of a human cancer cell phosphoproteome.</title>
        <authorList>
            <person name="Zhou H."/>
            <person name="Di Palma S."/>
            <person name="Preisinger C."/>
            <person name="Peng M."/>
            <person name="Polat A.N."/>
            <person name="Heck A.J."/>
            <person name="Mohammed S."/>
        </authorList>
    </citation>
    <scope>PHOSPHORYLATION [LARGE SCALE ANALYSIS] AT SER-140</scope>
    <scope>IDENTIFICATION BY MASS SPECTROMETRY [LARGE SCALE ANALYSIS]</scope>
    <source>
        <tissue>Cervix carcinoma</tissue>
        <tissue>Erythroleukemia</tissue>
    </source>
</reference>
<reference key="16">
    <citation type="journal article" date="2007" name="Nature">
        <title>Patterns of somatic mutation in human cancer genomes.</title>
        <authorList>
            <person name="Greenman C."/>
            <person name="Stephens P."/>
            <person name="Smith R."/>
            <person name="Dalgliesh G.L."/>
            <person name="Hunter C."/>
            <person name="Bignell G."/>
            <person name="Davies H."/>
            <person name="Teague J."/>
            <person name="Butler A."/>
            <person name="Stevens C."/>
            <person name="Edkins S."/>
            <person name="O'Meara S."/>
            <person name="Vastrik I."/>
            <person name="Schmidt E.E."/>
            <person name="Avis T."/>
            <person name="Barthorpe S."/>
            <person name="Bhamra G."/>
            <person name="Buck G."/>
            <person name="Choudhury B."/>
            <person name="Clements J."/>
            <person name="Cole J."/>
            <person name="Dicks E."/>
            <person name="Forbes S."/>
            <person name="Gray K."/>
            <person name="Halliday K."/>
            <person name="Harrison R."/>
            <person name="Hills K."/>
            <person name="Hinton J."/>
            <person name="Jenkinson A."/>
            <person name="Jones D."/>
            <person name="Menzies A."/>
            <person name="Mironenko T."/>
            <person name="Perry J."/>
            <person name="Raine K."/>
            <person name="Richardson D."/>
            <person name="Shepherd R."/>
            <person name="Small A."/>
            <person name="Tofts C."/>
            <person name="Varian J."/>
            <person name="Webb T."/>
            <person name="West S."/>
            <person name="Widaa S."/>
            <person name="Yates A."/>
            <person name="Cahill D.P."/>
            <person name="Louis D.N."/>
            <person name="Goldstraw P."/>
            <person name="Nicholson A.G."/>
            <person name="Brasseur F."/>
            <person name="Looijenga L."/>
            <person name="Weber B.L."/>
            <person name="Chiew Y.-E."/>
            <person name="DeFazio A."/>
            <person name="Greaves M.F."/>
            <person name="Green A.R."/>
            <person name="Campbell P."/>
            <person name="Birney E."/>
            <person name="Easton D.F."/>
            <person name="Chenevix-Trench G."/>
            <person name="Tan M.-H."/>
            <person name="Khoo S.K."/>
            <person name="Teh B.T."/>
            <person name="Yuen S.T."/>
            <person name="Leung S.Y."/>
            <person name="Wooster R."/>
            <person name="Futreal P.A."/>
            <person name="Stratton M.R."/>
        </authorList>
    </citation>
    <scope>VARIANTS [LARGE SCALE ANALYSIS] PHE-61; GLY-118; SER-307 AND THR-440</scope>
</reference>
<dbReference type="EC" id="2.7.12.1" evidence="5"/>
<dbReference type="EMBL" id="L29219">
    <property type="protein sequence ID" value="AAA61480.1"/>
    <property type="molecule type" value="mRNA"/>
</dbReference>
<dbReference type="EMBL" id="L29222">
    <property type="protein sequence ID" value="AAB59459.1"/>
    <property type="molecule type" value="mRNA"/>
</dbReference>
<dbReference type="EMBL" id="AK289365">
    <property type="protein sequence ID" value="BAF82054.1"/>
    <property type="molecule type" value="mRNA"/>
</dbReference>
<dbReference type="EMBL" id="AK294295">
    <property type="protein sequence ID" value="BAG57578.1"/>
    <property type="molecule type" value="mRNA"/>
</dbReference>
<dbReference type="EMBL" id="AC005037">
    <property type="protein sequence ID" value="AAY14722.1"/>
    <property type="molecule type" value="Genomic_DNA"/>
</dbReference>
<dbReference type="EMBL" id="CH471063">
    <property type="protein sequence ID" value="EAW70217.1"/>
    <property type="molecule type" value="Genomic_DNA"/>
</dbReference>
<dbReference type="EMBL" id="BC028149">
    <property type="protein sequence ID" value="AAH28149.1"/>
    <property type="molecule type" value="mRNA"/>
</dbReference>
<dbReference type="EMBL" id="BC031549">
    <property type="protein sequence ID" value="AAH31549.1"/>
    <property type="molecule type" value="mRNA"/>
</dbReference>
<dbReference type="CCDS" id="CCDS2331.1">
    <molecule id="P49759-1"/>
</dbReference>
<dbReference type="CCDS" id="CCDS54427.1">
    <molecule id="P49759-3"/>
</dbReference>
<dbReference type="PIR" id="S53641">
    <property type="entry name" value="S53641"/>
</dbReference>
<dbReference type="RefSeq" id="NP_001155879.1">
    <molecule id="P49759-3"/>
    <property type="nucleotide sequence ID" value="NM_001162407.1"/>
</dbReference>
<dbReference type="RefSeq" id="NP_004062.2">
    <molecule id="P49759-1"/>
    <property type="nucleotide sequence ID" value="NM_004071.4"/>
</dbReference>
<dbReference type="PDB" id="1Z57">
    <property type="method" value="X-ray"/>
    <property type="resolution" value="1.70 A"/>
    <property type="chains" value="A=148-484"/>
</dbReference>
<dbReference type="PDB" id="2VAG">
    <property type="method" value="X-ray"/>
    <property type="resolution" value="1.80 A"/>
    <property type="chains" value="A=148-484"/>
</dbReference>
<dbReference type="PDB" id="5J1V">
    <property type="method" value="X-ray"/>
    <property type="resolution" value="2.52 A"/>
    <property type="chains" value="A/B/C=148-484"/>
</dbReference>
<dbReference type="PDB" id="5J1W">
    <property type="method" value="X-ray"/>
    <property type="resolution" value="2.42 A"/>
    <property type="chains" value="A/B/C=148-484"/>
</dbReference>
<dbReference type="PDB" id="5X8I">
    <property type="method" value="X-ray"/>
    <property type="resolution" value="1.90 A"/>
    <property type="chains" value="A/B=148-484"/>
</dbReference>
<dbReference type="PDB" id="6FT8">
    <property type="method" value="X-ray"/>
    <property type="resolution" value="1.45 A"/>
    <property type="chains" value="A=148-484"/>
</dbReference>
<dbReference type="PDB" id="6FT9">
    <property type="method" value="X-ray"/>
    <property type="resolution" value="1.87 A"/>
    <property type="chains" value="A/B/C=148-484"/>
</dbReference>
<dbReference type="PDB" id="6FYO">
    <property type="method" value="X-ray"/>
    <property type="resolution" value="2.32 A"/>
    <property type="chains" value="A=148-484"/>
</dbReference>
<dbReference type="PDB" id="6G33">
    <property type="method" value="X-ray"/>
    <property type="resolution" value="2.05 A"/>
    <property type="chains" value="A/B/C=148-484"/>
</dbReference>
<dbReference type="PDB" id="6I5H">
    <property type="method" value="X-ray"/>
    <property type="resolution" value="1.49 A"/>
    <property type="chains" value="A=148-484"/>
</dbReference>
<dbReference type="PDB" id="6I5I">
    <property type="method" value="X-ray"/>
    <property type="resolution" value="1.60 A"/>
    <property type="chains" value="A=148-484"/>
</dbReference>
<dbReference type="PDB" id="6I5K">
    <property type="method" value="X-ray"/>
    <property type="resolution" value="2.30 A"/>
    <property type="chains" value="A/B/C=148-484"/>
</dbReference>
<dbReference type="PDB" id="6I5L">
    <property type="method" value="X-ray"/>
    <property type="resolution" value="2.55 A"/>
    <property type="chains" value="A/B/C=148-484"/>
</dbReference>
<dbReference type="PDB" id="6KHD">
    <property type="method" value="X-ray"/>
    <property type="resolution" value="2.70 A"/>
    <property type="chains" value="A/B/C=1-484"/>
</dbReference>
<dbReference type="PDB" id="6Q8K">
    <property type="method" value="X-ray"/>
    <property type="resolution" value="2.29 A"/>
    <property type="chains" value="A=148-484"/>
</dbReference>
<dbReference type="PDB" id="6Q8P">
    <property type="method" value="X-ray"/>
    <property type="resolution" value="3.00 A"/>
    <property type="chains" value="A/B/C=148-484"/>
</dbReference>
<dbReference type="PDB" id="6QTY">
    <property type="method" value="X-ray"/>
    <property type="resolution" value="1.65 A"/>
    <property type="chains" value="A=148-484"/>
</dbReference>
<dbReference type="PDB" id="6R3D">
    <property type="method" value="X-ray"/>
    <property type="resolution" value="1.85 A"/>
    <property type="chains" value="A=148-484"/>
</dbReference>
<dbReference type="PDB" id="6R6E">
    <property type="method" value="X-ray"/>
    <property type="resolution" value="2.25 A"/>
    <property type="chains" value="A=148-484"/>
</dbReference>
<dbReference type="PDB" id="6R6X">
    <property type="method" value="X-ray"/>
    <property type="resolution" value="2.05 A"/>
    <property type="chains" value="A=148-484"/>
</dbReference>
<dbReference type="PDB" id="6R8J">
    <property type="method" value="X-ray"/>
    <property type="resolution" value="1.75 A"/>
    <property type="chains" value="A=148-484"/>
</dbReference>
<dbReference type="PDB" id="6RAA">
    <property type="method" value="X-ray"/>
    <property type="resolution" value="2.10 A"/>
    <property type="chains" value="A=148-484"/>
</dbReference>
<dbReference type="PDB" id="6TW2">
    <property type="method" value="X-ray"/>
    <property type="resolution" value="1.80 A"/>
    <property type="chains" value="E=148-484"/>
</dbReference>
<dbReference type="PDB" id="6YTA">
    <property type="method" value="X-ray"/>
    <property type="resolution" value="2.30 A"/>
    <property type="chains" value="A=148-484"/>
</dbReference>
<dbReference type="PDB" id="6YTD">
    <property type="method" value="X-ray"/>
    <property type="resolution" value="2.00 A"/>
    <property type="chains" value="A=148-484"/>
</dbReference>
<dbReference type="PDB" id="6YTE">
    <property type="method" value="X-ray"/>
    <property type="resolution" value="2.30 A"/>
    <property type="chains" value="C=148-484"/>
</dbReference>
<dbReference type="PDB" id="6YTG">
    <property type="method" value="X-ray"/>
    <property type="resolution" value="1.95 A"/>
    <property type="chains" value="A=148-484"/>
</dbReference>
<dbReference type="PDB" id="6YTI">
    <property type="method" value="X-ray"/>
    <property type="resolution" value="2.40 A"/>
    <property type="chains" value="A=148-484"/>
</dbReference>
<dbReference type="PDB" id="6Z4Z">
    <property type="method" value="X-ray"/>
    <property type="resolution" value="2.07 A"/>
    <property type="chains" value="A/B/C=148-484"/>
</dbReference>
<dbReference type="PDB" id="6Z50">
    <property type="method" value="X-ray"/>
    <property type="resolution" value="1.60 A"/>
    <property type="chains" value="A=148-484"/>
</dbReference>
<dbReference type="PDB" id="6ZLN">
    <property type="method" value="X-ray"/>
    <property type="resolution" value="1.70 A"/>
    <property type="chains" value="A=148-484"/>
</dbReference>
<dbReference type="PDB" id="7AK3">
    <property type="method" value="X-ray"/>
    <property type="resolution" value="2.50 A"/>
    <property type="chains" value="A=148-484"/>
</dbReference>
<dbReference type="PDB" id="7O9Y">
    <property type="method" value="X-ray"/>
    <property type="resolution" value="1.66 A"/>
    <property type="chains" value="A=148-484"/>
</dbReference>
<dbReference type="PDB" id="7OA0">
    <property type="method" value="X-ray"/>
    <property type="resolution" value="1.81 A"/>
    <property type="chains" value="AAA=148-484"/>
</dbReference>
<dbReference type="PDB" id="7OPG">
    <property type="method" value="X-ray"/>
    <property type="resolution" value="1.93 A"/>
    <property type="chains" value="A/B/C=148-484"/>
</dbReference>
<dbReference type="PDB" id="8P04">
    <property type="method" value="X-ray"/>
    <property type="resolution" value="2.60 A"/>
    <property type="chains" value="A=148-484"/>
</dbReference>
<dbReference type="PDB" id="8P08">
    <property type="method" value="X-ray"/>
    <property type="resolution" value="2.40 A"/>
    <property type="chains" value="A=148-484"/>
</dbReference>
<dbReference type="PDB" id="8UWN">
    <property type="method" value="X-ray"/>
    <property type="resolution" value="1.80 A"/>
    <property type="chains" value="A=148-484"/>
</dbReference>
<dbReference type="PDBsum" id="1Z57"/>
<dbReference type="PDBsum" id="2VAG"/>
<dbReference type="PDBsum" id="5J1V"/>
<dbReference type="PDBsum" id="5J1W"/>
<dbReference type="PDBsum" id="5X8I"/>
<dbReference type="PDBsum" id="6FT8"/>
<dbReference type="PDBsum" id="6FT9"/>
<dbReference type="PDBsum" id="6FYO"/>
<dbReference type="PDBsum" id="6G33"/>
<dbReference type="PDBsum" id="6I5H"/>
<dbReference type="PDBsum" id="6I5I"/>
<dbReference type="PDBsum" id="6I5K"/>
<dbReference type="PDBsum" id="6I5L"/>
<dbReference type="PDBsum" id="6KHD"/>
<dbReference type="PDBsum" id="6Q8K"/>
<dbReference type="PDBsum" id="6Q8P"/>
<dbReference type="PDBsum" id="6QTY"/>
<dbReference type="PDBsum" id="6R3D"/>
<dbReference type="PDBsum" id="6R6E"/>
<dbReference type="PDBsum" id="6R6X"/>
<dbReference type="PDBsum" id="6R8J"/>
<dbReference type="PDBsum" id="6RAA"/>
<dbReference type="PDBsum" id="6TW2"/>
<dbReference type="PDBsum" id="6YTA"/>
<dbReference type="PDBsum" id="6YTD"/>
<dbReference type="PDBsum" id="6YTE"/>
<dbReference type="PDBsum" id="6YTG"/>
<dbReference type="PDBsum" id="6YTI"/>
<dbReference type="PDBsum" id="6Z4Z"/>
<dbReference type="PDBsum" id="6Z50"/>
<dbReference type="PDBsum" id="6ZLN"/>
<dbReference type="PDBsum" id="7AK3"/>
<dbReference type="PDBsum" id="7O9Y"/>
<dbReference type="PDBsum" id="7OA0"/>
<dbReference type="PDBsum" id="7OPG"/>
<dbReference type="PDBsum" id="8P04"/>
<dbReference type="PDBsum" id="8P08"/>
<dbReference type="PDBsum" id="8UWN"/>
<dbReference type="SMR" id="P49759"/>
<dbReference type="BioGRID" id="107606">
    <property type="interactions" value="220"/>
</dbReference>
<dbReference type="FunCoup" id="P49759">
    <property type="interactions" value="2360"/>
</dbReference>
<dbReference type="IntAct" id="P49759">
    <property type="interactions" value="61"/>
</dbReference>
<dbReference type="MINT" id="P49759"/>
<dbReference type="STRING" id="9606.ENSP00000394734"/>
<dbReference type="BindingDB" id="P49759"/>
<dbReference type="ChEMBL" id="CHEMBL4224"/>
<dbReference type="DrugBank" id="DB06376">
    <property type="generic name" value="CHGN111"/>
</dbReference>
<dbReference type="DrugBank" id="DB04367">
    <property type="generic name" value="Debromohymenialdisine"/>
</dbReference>
<dbReference type="DrugBank" id="DB08691">
    <property type="generic name" value="ethyl 3-[(E)-2-amino-1-cyanoethenyl]-6,7-dichloro-1-methyl-1H-indole-2-carboxylate"/>
</dbReference>
<dbReference type="DrugBank" id="DB12010">
    <property type="generic name" value="Fostamatinib"/>
</dbReference>
<dbReference type="DrugCentral" id="P49759"/>
<dbReference type="GuidetoPHARMACOLOGY" id="1990"/>
<dbReference type="GlyCosmos" id="P49759">
    <property type="glycosylation" value="1 site, 1 glycan"/>
</dbReference>
<dbReference type="GlyGen" id="P49759">
    <property type="glycosylation" value="3 sites, 1 O-linked glycan (3 sites)"/>
</dbReference>
<dbReference type="iPTMnet" id="P49759"/>
<dbReference type="PhosphoSitePlus" id="P49759"/>
<dbReference type="BioMuta" id="CLK1"/>
<dbReference type="DMDM" id="206729857"/>
<dbReference type="CPTAC" id="CPTAC-3157"/>
<dbReference type="jPOST" id="P49759"/>
<dbReference type="MassIVE" id="P49759"/>
<dbReference type="PaxDb" id="9606-ENSP00000394734"/>
<dbReference type="PeptideAtlas" id="P49759"/>
<dbReference type="ProteomicsDB" id="56090">
    <molecule id="P49759-1"/>
</dbReference>
<dbReference type="ProteomicsDB" id="56091">
    <molecule id="P49759-2"/>
</dbReference>
<dbReference type="ProteomicsDB" id="56092">
    <molecule id="P49759-3"/>
</dbReference>
<dbReference type="Pumba" id="P49759"/>
<dbReference type="Antibodypedia" id="34923">
    <property type="antibodies" value="218 antibodies from 29 providers"/>
</dbReference>
<dbReference type="DNASU" id="1195"/>
<dbReference type="Ensembl" id="ENST00000321356.9">
    <molecule id="P49759-1"/>
    <property type="protein sequence ID" value="ENSP00000326830.4"/>
    <property type="gene ID" value="ENSG00000013441.17"/>
</dbReference>
<dbReference type="Ensembl" id="ENST00000432425.5">
    <molecule id="P49759-2"/>
    <property type="protein sequence ID" value="ENSP00000400487.1"/>
    <property type="gene ID" value="ENSG00000013441.17"/>
</dbReference>
<dbReference type="Ensembl" id="ENST00000434813.3">
    <molecule id="P49759-3"/>
    <property type="protein sequence ID" value="ENSP00000394734.2"/>
    <property type="gene ID" value="ENSG00000013441.17"/>
</dbReference>
<dbReference type="GeneID" id="1195"/>
<dbReference type="KEGG" id="hsa:1195"/>
<dbReference type="MANE-Select" id="ENST00000321356.9">
    <property type="protein sequence ID" value="ENSP00000326830.4"/>
    <property type="RefSeq nucleotide sequence ID" value="NM_004071.4"/>
    <property type="RefSeq protein sequence ID" value="NP_004062.2"/>
</dbReference>
<dbReference type="UCSC" id="uc002uwe.3">
    <molecule id="P49759-1"/>
    <property type="organism name" value="human"/>
</dbReference>
<dbReference type="AGR" id="HGNC:2068"/>
<dbReference type="CTD" id="1195"/>
<dbReference type="DisGeNET" id="1195"/>
<dbReference type="GeneCards" id="CLK1"/>
<dbReference type="HGNC" id="HGNC:2068">
    <property type="gene designation" value="CLK1"/>
</dbReference>
<dbReference type="HPA" id="ENSG00000013441">
    <property type="expression patterns" value="Low tissue specificity"/>
</dbReference>
<dbReference type="MIM" id="601951">
    <property type="type" value="gene"/>
</dbReference>
<dbReference type="neXtProt" id="NX_P49759"/>
<dbReference type="OpenTargets" id="ENSG00000013441"/>
<dbReference type="PharmGKB" id="PA26594"/>
<dbReference type="VEuPathDB" id="HostDB:ENSG00000013441"/>
<dbReference type="eggNOG" id="KOG0671">
    <property type="taxonomic scope" value="Eukaryota"/>
</dbReference>
<dbReference type="GeneTree" id="ENSGT00940000159722"/>
<dbReference type="HOGENOM" id="CLU_126079_0_0_1"/>
<dbReference type="InParanoid" id="P49759"/>
<dbReference type="OMA" id="HENGYHN"/>
<dbReference type="OrthoDB" id="283111at2759"/>
<dbReference type="PAN-GO" id="P49759">
    <property type="GO annotations" value="5 GO annotations based on evolutionary models"/>
</dbReference>
<dbReference type="PhylomeDB" id="P49759"/>
<dbReference type="TreeFam" id="TF101041"/>
<dbReference type="BRENDA" id="2.7.12.1">
    <property type="organism ID" value="2681"/>
</dbReference>
<dbReference type="PathwayCommons" id="P49759"/>
<dbReference type="SignaLink" id="P49759"/>
<dbReference type="SIGNOR" id="P49759"/>
<dbReference type="BioGRID-ORCS" id="1195">
    <property type="hits" value="8 hits in 1192 CRISPR screens"/>
</dbReference>
<dbReference type="ChiTaRS" id="CLK1">
    <property type="organism name" value="human"/>
</dbReference>
<dbReference type="EvolutionaryTrace" id="P49759"/>
<dbReference type="GeneWiki" id="CLK1"/>
<dbReference type="GenomeRNAi" id="1195"/>
<dbReference type="Pharos" id="P49759">
    <property type="development level" value="Tchem"/>
</dbReference>
<dbReference type="PRO" id="PR:P49759"/>
<dbReference type="Proteomes" id="UP000005640">
    <property type="component" value="Chromosome 2"/>
</dbReference>
<dbReference type="RNAct" id="P49759">
    <property type="molecule type" value="protein"/>
</dbReference>
<dbReference type="Bgee" id="ENSG00000013441">
    <property type="expression patterns" value="Expressed in granulocyte and 203 other cell types or tissues"/>
</dbReference>
<dbReference type="ExpressionAtlas" id="P49759">
    <property type="expression patterns" value="baseline and differential"/>
</dbReference>
<dbReference type="GO" id="GO:0005634">
    <property type="term" value="C:nucleus"/>
    <property type="evidence" value="ECO:0000318"/>
    <property type="project" value="GO_Central"/>
</dbReference>
<dbReference type="GO" id="GO:0005524">
    <property type="term" value="F:ATP binding"/>
    <property type="evidence" value="ECO:0007669"/>
    <property type="project" value="UniProtKB-KW"/>
</dbReference>
<dbReference type="GO" id="GO:0004715">
    <property type="term" value="F:non-membrane spanning protein tyrosine kinase activity"/>
    <property type="evidence" value="ECO:0000304"/>
    <property type="project" value="ProtInc"/>
</dbReference>
<dbReference type="GO" id="GO:0106310">
    <property type="term" value="F:protein serine kinase activity"/>
    <property type="evidence" value="ECO:0007669"/>
    <property type="project" value="RHEA"/>
</dbReference>
<dbReference type="GO" id="GO:0004674">
    <property type="term" value="F:protein serine/threonine kinase activity"/>
    <property type="evidence" value="ECO:0000314"/>
    <property type="project" value="UniProtKB"/>
</dbReference>
<dbReference type="GO" id="GO:0004712">
    <property type="term" value="F:protein serine/threonine/tyrosine kinase activity"/>
    <property type="evidence" value="ECO:0007669"/>
    <property type="project" value="UniProtKB-EC"/>
</dbReference>
<dbReference type="GO" id="GO:0004713">
    <property type="term" value="F:protein tyrosine kinase activity"/>
    <property type="evidence" value="ECO:0000318"/>
    <property type="project" value="GO_Central"/>
</dbReference>
<dbReference type="GO" id="GO:0043484">
    <property type="term" value="P:regulation of RNA splicing"/>
    <property type="evidence" value="ECO:0000315"/>
    <property type="project" value="UniProtKB"/>
</dbReference>
<dbReference type="CDD" id="cd14213">
    <property type="entry name" value="PKc_CLK1_4"/>
    <property type="match status" value="1"/>
</dbReference>
<dbReference type="FunFam" id="3.30.200.20:FF:000061">
    <property type="entry name" value="Dual specificity protein kinase CLK2"/>
    <property type="match status" value="1"/>
</dbReference>
<dbReference type="FunFam" id="1.10.510.10:FF:000220">
    <property type="entry name" value="dual specificity protein kinase CLK4 isoform X1"/>
    <property type="match status" value="1"/>
</dbReference>
<dbReference type="Gene3D" id="3.30.200.20">
    <property type="entry name" value="Phosphorylase Kinase, domain 1"/>
    <property type="match status" value="1"/>
</dbReference>
<dbReference type="Gene3D" id="1.10.510.10">
    <property type="entry name" value="Transferase(Phosphotransferase) domain 1"/>
    <property type="match status" value="1"/>
</dbReference>
<dbReference type="InterPro" id="IPR051175">
    <property type="entry name" value="CLK_kinases"/>
</dbReference>
<dbReference type="InterPro" id="IPR011009">
    <property type="entry name" value="Kinase-like_dom_sf"/>
</dbReference>
<dbReference type="InterPro" id="IPR000719">
    <property type="entry name" value="Prot_kinase_dom"/>
</dbReference>
<dbReference type="InterPro" id="IPR017441">
    <property type="entry name" value="Protein_kinase_ATP_BS"/>
</dbReference>
<dbReference type="InterPro" id="IPR008271">
    <property type="entry name" value="Ser/Thr_kinase_AS"/>
</dbReference>
<dbReference type="PANTHER" id="PTHR45646:SF4">
    <property type="entry name" value="DUAL SPECIFICITY PROTEIN KINASE CLK1"/>
    <property type="match status" value="1"/>
</dbReference>
<dbReference type="PANTHER" id="PTHR45646">
    <property type="entry name" value="SERINE/THREONINE-PROTEIN KINASE DOA-RELATED"/>
    <property type="match status" value="1"/>
</dbReference>
<dbReference type="Pfam" id="PF00069">
    <property type="entry name" value="Pkinase"/>
    <property type="match status" value="1"/>
</dbReference>
<dbReference type="SMART" id="SM00220">
    <property type="entry name" value="S_TKc"/>
    <property type="match status" value="1"/>
</dbReference>
<dbReference type="SUPFAM" id="SSF56112">
    <property type="entry name" value="Protein kinase-like (PK-like)"/>
    <property type="match status" value="1"/>
</dbReference>
<dbReference type="PROSITE" id="PS00107">
    <property type="entry name" value="PROTEIN_KINASE_ATP"/>
    <property type="match status" value="1"/>
</dbReference>
<dbReference type="PROSITE" id="PS50011">
    <property type="entry name" value="PROTEIN_KINASE_DOM"/>
    <property type="match status" value="1"/>
</dbReference>
<dbReference type="PROSITE" id="PS00108">
    <property type="entry name" value="PROTEIN_KINASE_ST"/>
    <property type="match status" value="1"/>
</dbReference>